<gene>
    <name evidence="1" type="primary">rpo1C</name>
    <name evidence="1 5" type="synonym">rpoA2</name>
    <name evidence="6" type="synonym">rpoC</name>
    <name type="ordered locus">Saci_0691</name>
</gene>
<dbReference type="EC" id="2.7.7.6" evidence="1 4"/>
<dbReference type="EMBL" id="X14818">
    <property type="protein sequence ID" value="CAA32926.1"/>
    <property type="molecule type" value="Genomic_DNA"/>
</dbReference>
<dbReference type="EMBL" id="CP000077">
    <property type="protein sequence ID" value="AAY80071.1"/>
    <property type="molecule type" value="Genomic_DNA"/>
</dbReference>
<dbReference type="PIR" id="S04718">
    <property type="entry name" value="S04718"/>
</dbReference>
<dbReference type="RefSeq" id="WP_011277573.1">
    <property type="nucleotide sequence ID" value="NC_007181.1"/>
</dbReference>
<dbReference type="PDB" id="7OK0">
    <property type="method" value="EM"/>
    <property type="resolution" value="2.90 A"/>
    <property type="chains" value="C=1-393"/>
</dbReference>
<dbReference type="PDB" id="7OQ4">
    <property type="method" value="EM"/>
    <property type="resolution" value="3.27 A"/>
    <property type="chains" value="C=1-393"/>
</dbReference>
<dbReference type="PDB" id="7OQY">
    <property type="method" value="EM"/>
    <property type="resolution" value="2.61 A"/>
    <property type="chains" value="C=1-393"/>
</dbReference>
<dbReference type="PDBsum" id="7OK0"/>
<dbReference type="PDBsum" id="7OQ4"/>
<dbReference type="PDBsum" id="7OQY"/>
<dbReference type="EMDB" id="EMD-12960"/>
<dbReference type="EMDB" id="EMD-13034"/>
<dbReference type="SMR" id="P11514"/>
<dbReference type="STRING" id="330779.Saci_0691"/>
<dbReference type="GeneID" id="14551206"/>
<dbReference type="GeneID" id="78441033"/>
<dbReference type="KEGG" id="sai:Saci_0691"/>
<dbReference type="PATRIC" id="fig|330779.12.peg.659"/>
<dbReference type="eggNOG" id="arCOG04256">
    <property type="taxonomic scope" value="Archaea"/>
</dbReference>
<dbReference type="HOGENOM" id="CLU_037097_1_0_2"/>
<dbReference type="Proteomes" id="UP000001018">
    <property type="component" value="Chromosome"/>
</dbReference>
<dbReference type="GO" id="GO:0005737">
    <property type="term" value="C:cytoplasm"/>
    <property type="evidence" value="ECO:0007669"/>
    <property type="project" value="UniProtKB-SubCell"/>
</dbReference>
<dbReference type="GO" id="GO:0000428">
    <property type="term" value="C:DNA-directed RNA polymerase complex"/>
    <property type="evidence" value="ECO:0000314"/>
    <property type="project" value="UniProtKB"/>
</dbReference>
<dbReference type="GO" id="GO:0003677">
    <property type="term" value="F:DNA binding"/>
    <property type="evidence" value="ECO:0007669"/>
    <property type="project" value="UniProtKB-UniRule"/>
</dbReference>
<dbReference type="GO" id="GO:0003899">
    <property type="term" value="F:DNA-directed RNA polymerase activity"/>
    <property type="evidence" value="ECO:0000314"/>
    <property type="project" value="UniProtKB"/>
</dbReference>
<dbReference type="GO" id="GO:0006351">
    <property type="term" value="P:DNA-templated transcription"/>
    <property type="evidence" value="ECO:0000314"/>
    <property type="project" value="UniProtKB"/>
</dbReference>
<dbReference type="CDD" id="cd06528">
    <property type="entry name" value="RNAP_A"/>
    <property type="match status" value="1"/>
</dbReference>
<dbReference type="Gene3D" id="1.10.150.390">
    <property type="match status" value="1"/>
</dbReference>
<dbReference type="HAMAP" id="MF_00411">
    <property type="entry name" value="RNApol_arch_Rpo1C"/>
    <property type="match status" value="1"/>
</dbReference>
<dbReference type="InterPro" id="IPR045867">
    <property type="entry name" value="DNA-dir_RpoC_beta_prime"/>
</dbReference>
<dbReference type="InterPro" id="IPR007081">
    <property type="entry name" value="RNA_pol_Rpb1_5"/>
</dbReference>
<dbReference type="InterPro" id="IPR012757">
    <property type="entry name" value="RPO1C"/>
</dbReference>
<dbReference type="NCBIfam" id="TIGR02389">
    <property type="entry name" value="RNA_pol_rpoA2"/>
    <property type="match status" value="1"/>
</dbReference>
<dbReference type="PANTHER" id="PTHR19376">
    <property type="entry name" value="DNA-DIRECTED RNA POLYMERASE"/>
    <property type="match status" value="1"/>
</dbReference>
<dbReference type="PANTHER" id="PTHR19376:SF32">
    <property type="entry name" value="DNA-DIRECTED RNA POLYMERASE III SUBUNIT RPC1"/>
    <property type="match status" value="1"/>
</dbReference>
<dbReference type="Pfam" id="PF04998">
    <property type="entry name" value="RNA_pol_Rpb1_5"/>
    <property type="match status" value="1"/>
</dbReference>
<dbReference type="SUPFAM" id="SSF64484">
    <property type="entry name" value="beta and beta-prime subunits of DNA dependent RNA-polymerase"/>
    <property type="match status" value="1"/>
</dbReference>
<comment type="function">
    <text evidence="1 3 4">DNA-dependent RNA polymerase (RNAP) catalyzes the transcription of DNA into RNA using the four ribonucleoside triphosphates as substrates. Forms part of the jaw domain.</text>
</comment>
<comment type="function">
    <text evidence="4">Reconstitution experiments show this subunit is required for basic activity.</text>
</comment>
<comment type="catalytic activity">
    <reaction evidence="1 4">
        <text>RNA(n) + a ribonucleoside 5'-triphosphate = RNA(n+1) + diphosphate</text>
        <dbReference type="Rhea" id="RHEA:21248"/>
        <dbReference type="Rhea" id="RHEA-COMP:14527"/>
        <dbReference type="Rhea" id="RHEA-COMP:17342"/>
        <dbReference type="ChEBI" id="CHEBI:33019"/>
        <dbReference type="ChEBI" id="CHEBI:61557"/>
        <dbReference type="ChEBI" id="CHEBI:140395"/>
        <dbReference type="EC" id="2.7.7.6"/>
    </reaction>
</comment>
<comment type="subunit">
    <text evidence="2 3 4 10 11 12">Part of the 13-subunit RNA polymerase complex (PubMed:34535646). Interacts with TFS4 (PubMed:34535646).</text>
</comment>
<comment type="subcellular location">
    <subcellularLocation>
        <location evidence="1">Cytoplasm</location>
    </subcellularLocation>
</comment>
<comment type="similarity">
    <text evidence="1 9">Belongs to the RNA polymerase beta' chain family.</text>
</comment>
<sequence>MIDEKLKGYIDKRLNEIKDKIPDKLHEDLRAAIMDINGVELTEEDIDRIIDLTIREYQQSLIEPGEAIGVVTAQSVGEPGTQMTLRTFHFAGIRELNVTLGLPRLIEIVDARKVPSTPMMTIYLTDEYKTDKDKALDIARRIEYTRVENVVSSVSVDISNMSITLQFDQEMLKDKGVSIEEIKKIITKLKLGEIRIEDNDEYSFTIYFEKIDSIMALFKMREKILNTKIKGVKGIKRAIVQKKGDEYVIITDGSNLEGIMNVTGVDINKIQTNNIHEVEEVLGIEAARELISREIKKVLEEQGLDVDMRHIVLVSDIMTRTGDIRQIGRHGVTGEKSSVLARAAFEVTVKHLLDAAARGEREEFKGVIENIIIGQPIRLGTGIVELTMKPNMR</sequence>
<evidence type="ECO:0000255" key="1">
    <source>
        <dbReference type="HAMAP-Rule" id="MF_00411"/>
    </source>
</evidence>
<evidence type="ECO:0000269" key="2">
    <source>
    </source>
</evidence>
<evidence type="ECO:0000269" key="3">
    <source>
    </source>
</evidence>
<evidence type="ECO:0000269" key="4">
    <source ref="4"/>
</evidence>
<evidence type="ECO:0000303" key="5">
    <source>
    </source>
</evidence>
<evidence type="ECO:0000303" key="6">
    <source>
    </source>
</evidence>
<evidence type="ECO:0000303" key="7">
    <source>
    </source>
</evidence>
<evidence type="ECO:0000303" key="8">
    <source ref="4"/>
</evidence>
<evidence type="ECO:0000305" key="9"/>
<evidence type="ECO:0000312" key="10">
    <source>
        <dbReference type="PDB" id="7OK0"/>
    </source>
</evidence>
<evidence type="ECO:0000312" key="11">
    <source>
        <dbReference type="PDB" id="7OQ4"/>
    </source>
</evidence>
<evidence type="ECO:0000312" key="12">
    <source>
        <dbReference type="PDB" id="7OQY"/>
    </source>
</evidence>
<evidence type="ECO:0007829" key="13">
    <source>
        <dbReference type="PDB" id="7OK0"/>
    </source>
</evidence>
<evidence type="ECO:0007829" key="14">
    <source>
        <dbReference type="PDB" id="7OQY"/>
    </source>
</evidence>
<protein>
    <recommendedName>
        <fullName evidence="1">DNA-directed RNA polymerase subunit Rpo1C</fullName>
        <ecNumber evidence="1 4">2.7.7.6</ecNumber>
    </recommendedName>
    <alternativeName>
        <fullName evidence="1 8">DNA-directed RNA polymerase subunit A''</fullName>
    </alternativeName>
    <alternativeName>
        <fullName evidence="6">DNA-directed RNA polymerase subunit C</fullName>
    </alternativeName>
    <alternativeName>
        <fullName evidence="7">Rpo1''</fullName>
    </alternativeName>
</protein>
<keyword id="KW-0002">3D-structure</keyword>
<keyword id="KW-0963">Cytoplasm</keyword>
<keyword id="KW-0238">DNA-binding</keyword>
<keyword id="KW-0240">DNA-directed RNA polymerase</keyword>
<keyword id="KW-0548">Nucleotidyltransferase</keyword>
<keyword id="KW-1185">Reference proteome</keyword>
<keyword id="KW-0804">Transcription</keyword>
<keyword id="KW-0808">Transferase</keyword>
<feature type="chain" id="PRO_0000074025" description="DNA-directed RNA polymerase subunit Rpo1C">
    <location>
        <begin position="1"/>
        <end position="393"/>
    </location>
</feature>
<feature type="sequence conflict" description="In Ref. 1; CAA32926." evidence="9" ref="1">
    <original>NTKIKGVKGI</original>
    <variation>IQDKGSQGY</variation>
    <location>
        <begin position="226"/>
        <end position="235"/>
    </location>
</feature>
<feature type="sequence conflict" description="In Ref. 1; CAA32926." evidence="9" ref="1">
    <original>I</original>
    <variation>M</variation>
    <location>
        <position position="284"/>
    </location>
</feature>
<feature type="helix" evidence="14">
    <location>
        <begin position="4"/>
        <end position="14"/>
    </location>
</feature>
<feature type="helix" evidence="13">
    <location>
        <begin position="15"/>
        <end position="17"/>
    </location>
</feature>
<feature type="turn" evidence="14">
    <location>
        <begin position="18"/>
        <end position="20"/>
    </location>
</feature>
<feature type="helix" evidence="14">
    <location>
        <begin position="23"/>
        <end position="33"/>
    </location>
</feature>
<feature type="helix" evidence="14">
    <location>
        <begin position="43"/>
        <end position="58"/>
    </location>
</feature>
<feature type="helix" evidence="14">
    <location>
        <begin position="68"/>
        <end position="77"/>
    </location>
</feature>
<feature type="helix" evidence="14">
    <location>
        <begin position="79"/>
        <end position="81"/>
    </location>
</feature>
<feature type="helix" evidence="14">
    <location>
        <begin position="101"/>
        <end position="109"/>
    </location>
</feature>
<feature type="strand" evidence="14">
    <location>
        <begin position="120"/>
        <end position="122"/>
    </location>
</feature>
<feature type="helix" evidence="14">
    <location>
        <begin position="126"/>
        <end position="129"/>
    </location>
</feature>
<feature type="helix" evidence="14">
    <location>
        <begin position="132"/>
        <end position="142"/>
    </location>
</feature>
<feature type="helix" evidence="14">
    <location>
        <begin position="147"/>
        <end position="149"/>
    </location>
</feature>
<feature type="strand" evidence="14">
    <location>
        <begin position="150"/>
        <end position="157"/>
    </location>
</feature>
<feature type="turn" evidence="14">
    <location>
        <begin position="158"/>
        <end position="161"/>
    </location>
</feature>
<feature type="strand" evidence="14">
    <location>
        <begin position="162"/>
        <end position="167"/>
    </location>
</feature>
<feature type="helix" evidence="14">
    <location>
        <begin position="169"/>
        <end position="174"/>
    </location>
</feature>
<feature type="helix" evidence="14">
    <location>
        <begin position="179"/>
        <end position="187"/>
    </location>
</feature>
<feature type="strand" evidence="14">
    <location>
        <begin position="196"/>
        <end position="200"/>
    </location>
</feature>
<feature type="strand" evidence="14">
    <location>
        <begin position="203"/>
        <end position="206"/>
    </location>
</feature>
<feature type="helix" evidence="14">
    <location>
        <begin position="215"/>
        <end position="225"/>
    </location>
</feature>
<feature type="strand" evidence="14">
    <location>
        <begin position="228"/>
        <end position="231"/>
    </location>
</feature>
<feature type="strand" evidence="14">
    <location>
        <begin position="238"/>
        <end position="253"/>
    </location>
</feature>
<feature type="helix" evidence="14">
    <location>
        <begin position="256"/>
        <end position="260"/>
    </location>
</feature>
<feature type="helix" evidence="13">
    <location>
        <begin position="267"/>
        <end position="269"/>
    </location>
</feature>
<feature type="strand" evidence="14">
    <location>
        <begin position="271"/>
        <end position="273"/>
    </location>
</feature>
<feature type="helix" evidence="14">
    <location>
        <begin position="275"/>
        <end position="282"/>
    </location>
</feature>
<feature type="helix" evidence="14">
    <location>
        <begin position="284"/>
        <end position="300"/>
    </location>
</feature>
<feature type="turn" evidence="14">
    <location>
        <begin position="301"/>
        <end position="303"/>
    </location>
</feature>
<feature type="helix" evidence="14">
    <location>
        <begin position="308"/>
        <end position="317"/>
    </location>
</feature>
<feature type="turn" evidence="14">
    <location>
        <begin position="318"/>
        <end position="321"/>
    </location>
</feature>
<feature type="turn" evidence="14">
    <location>
        <begin position="332"/>
        <end position="335"/>
    </location>
</feature>
<feature type="helix" evidence="14">
    <location>
        <begin position="339"/>
        <end position="345"/>
    </location>
</feature>
<feature type="helix" evidence="14">
    <location>
        <begin position="350"/>
        <end position="358"/>
    </location>
</feature>
<feature type="helix" evidence="14">
    <location>
        <begin position="368"/>
        <end position="373"/>
    </location>
</feature>
<feature type="helix" evidence="14">
    <location>
        <begin position="380"/>
        <end position="382"/>
    </location>
</feature>
<feature type="strand" evidence="14">
    <location>
        <begin position="386"/>
        <end position="388"/>
    </location>
</feature>
<proteinExistence type="evidence at protein level"/>
<accession>P11514</accession>
<accession>Q4JAV8</accession>
<name>RPO1C_SULAC</name>
<reference key="1">
    <citation type="journal article" date="1989" name="Nucleic Acids Res.">
        <title>Organization and nucleotide sequence of the genes encoding the large subunits A, B and C of the DNA-dependent RNA polymerase of the archaebacterium Sulfolobus acidocaldarius.</title>
        <authorList>
            <person name="Puehler G."/>
            <person name="Lottspeich F."/>
            <person name="Zillig W."/>
        </authorList>
    </citation>
    <scope>NUCLEOTIDE SEQUENCE [GENOMIC DNA]</scope>
    <source>
        <strain>ATCC 33909 / DSM 639 / JCM 8929 / NBRC 15157 / NCIMB 11770</strain>
    </source>
</reference>
<reference key="2">
    <citation type="journal article" date="2005" name="J. Bacteriol.">
        <title>The genome of Sulfolobus acidocaldarius, a model organism of the Crenarchaeota.</title>
        <authorList>
            <person name="Chen L."/>
            <person name="Bruegger K."/>
            <person name="Skovgaard M."/>
            <person name="Redder P."/>
            <person name="She Q."/>
            <person name="Torarinsson E."/>
            <person name="Greve B."/>
            <person name="Awayez M."/>
            <person name="Zibat A."/>
            <person name="Klenk H.-P."/>
            <person name="Garrett R.A."/>
        </authorList>
    </citation>
    <scope>NUCLEOTIDE SEQUENCE [LARGE SCALE GENOMIC DNA]</scope>
    <source>
        <strain>ATCC 33909 / DSM 639 / JCM 8929 / NBRC 15157 / NCIMB 11770</strain>
    </source>
</reference>
<reference key="3">
    <citation type="journal article" date="1992" name="Proc. Natl. Acad. Sci. U.S.A.">
        <title>Component H of the DNA-dependent RNA polymerases of Archaea is homologous to a subunit shared by the three eucaryal nuclear RNA polymerases.</title>
        <authorList>
            <person name="Klenk H.-P."/>
            <person name="Palm P."/>
            <person name="Lottspeich F."/>
            <person name="Zillig W."/>
        </authorList>
    </citation>
    <scope>SUBUNIT</scope>
    <source>
        <strain>ATCC 33909 / DSM 639 / JCM 8929 / NBRC 15157 / NCIMB 11770</strain>
    </source>
</reference>
<reference key="4">
    <citation type="journal article" date="1994" name="Syst. Appl. Microbiol.">
        <title>Structure and Function of the DNA-Dependent RNA Polymerase of Sulfolobus.</title>
        <authorList>
            <person name="Lanzendorfer M."/>
            <person name="Langer D."/>
            <person name="Hain J."/>
            <person name="Klenk H.-P."/>
            <person name="Holz I."/>
            <person name="Arnold-Ammer I."/>
            <person name="Zillig W."/>
        </authorList>
    </citation>
    <scope>FUNCTION</scope>
    <scope>CATALYTIC ACTIVITY</scope>
    <scope>SUBUNIT</scope>
    <source>
        <strain>ATCC 33909 / DSM 639 / JCM 8929 / NBRC 15157 / NCIMB 11770</strain>
    </source>
</reference>
<reference evidence="10 11 12" key="5">
    <citation type="journal article" date="2021" name="Nat. Commun.">
        <title>Structural basis of RNA polymerase inhibition by viral and host factors.</title>
        <authorList>
            <person name="Pilotto S."/>
            <person name="Fouqueau T."/>
            <person name="Lukoyanova N."/>
            <person name="Sheppard C."/>
            <person name="Lucas-Staat S."/>
            <person name="Diaz-Santin L.M."/>
            <person name="Matelska D."/>
            <person name="Prangishvili D."/>
            <person name="Cheung A.C.M."/>
            <person name="Werner F."/>
        </authorList>
    </citation>
    <scope>STRUCTURE BY ELECTRON MICROSCOPY (2.61 ANGSTROMS) OF RNAP WITH AND WITHOUT INHIBITORS</scope>
    <scope>FUNCTION</scope>
    <scope>INTERACTION WITH TFS4</scope>
    <scope>SUBUNIT</scope>
    <source>
        <strain>ATCC 33909 / DSM 639 / JCM 8929 / NBRC 15157 / NCIMB 11770</strain>
    </source>
</reference>
<organism>
    <name type="scientific">Sulfolobus acidocaldarius (strain ATCC 33909 / DSM 639 / JCM 8929 / NBRC 15157 / NCIMB 11770)</name>
    <dbReference type="NCBI Taxonomy" id="330779"/>
    <lineage>
        <taxon>Archaea</taxon>
        <taxon>Thermoproteota</taxon>
        <taxon>Thermoprotei</taxon>
        <taxon>Sulfolobales</taxon>
        <taxon>Sulfolobaceae</taxon>
        <taxon>Sulfolobus</taxon>
    </lineage>
</organism>